<organism>
    <name type="scientific">Hahella chejuensis (strain KCTC 2396)</name>
    <dbReference type="NCBI Taxonomy" id="349521"/>
    <lineage>
        <taxon>Bacteria</taxon>
        <taxon>Pseudomonadati</taxon>
        <taxon>Pseudomonadota</taxon>
        <taxon>Gammaproteobacteria</taxon>
        <taxon>Oceanospirillales</taxon>
        <taxon>Hahellaceae</taxon>
        <taxon>Hahella</taxon>
    </lineage>
</organism>
<evidence type="ECO:0000255" key="1">
    <source>
        <dbReference type="HAMAP-Rule" id="MF_00048"/>
    </source>
</evidence>
<feature type="chain" id="PRO_0000336186" description="UPF0102 protein HCH_05895">
    <location>
        <begin position="1"/>
        <end position="124"/>
    </location>
</feature>
<reference key="1">
    <citation type="journal article" date="2005" name="Nucleic Acids Res.">
        <title>Genomic blueprint of Hahella chejuensis, a marine microbe producing an algicidal agent.</title>
        <authorList>
            <person name="Jeong H."/>
            <person name="Yim J.H."/>
            <person name="Lee C."/>
            <person name="Choi S.-H."/>
            <person name="Park Y.K."/>
            <person name="Yoon S.H."/>
            <person name="Hur C.-G."/>
            <person name="Kang H.-Y."/>
            <person name="Kim D."/>
            <person name="Lee H.H."/>
            <person name="Park K.H."/>
            <person name="Park S.-H."/>
            <person name="Park H.-S."/>
            <person name="Lee H.K."/>
            <person name="Oh T.K."/>
            <person name="Kim J.F."/>
        </authorList>
    </citation>
    <scope>NUCLEOTIDE SEQUENCE [LARGE SCALE GENOMIC DNA]</scope>
    <source>
        <strain>KCTC 2396</strain>
    </source>
</reference>
<sequence>MPFKRLIKSIDIGRAAESQAEKFARAQGFTIVERNFRCKGGEIDLIARHGEHLVFIEVRHRSSDKFGSAAESITQKKQQRIILAANIYLQKKGLTNMPCRFDVIVGNLKSNTGFQWIPDAFSCW</sequence>
<gene>
    <name type="ordered locus">HCH_05895</name>
</gene>
<accession>Q2S9Y0</accession>
<protein>
    <recommendedName>
        <fullName evidence="1">UPF0102 protein HCH_05895</fullName>
    </recommendedName>
</protein>
<comment type="similarity">
    <text evidence="1">Belongs to the UPF0102 family.</text>
</comment>
<dbReference type="EMBL" id="CP000155">
    <property type="protein sequence ID" value="ABC32544.1"/>
    <property type="molecule type" value="Genomic_DNA"/>
</dbReference>
<dbReference type="RefSeq" id="WP_011399603.1">
    <property type="nucleotide sequence ID" value="NC_007645.1"/>
</dbReference>
<dbReference type="SMR" id="Q2S9Y0"/>
<dbReference type="STRING" id="349521.HCH_05895"/>
<dbReference type="KEGG" id="hch:HCH_05895"/>
<dbReference type="eggNOG" id="COG0792">
    <property type="taxonomic scope" value="Bacteria"/>
</dbReference>
<dbReference type="HOGENOM" id="CLU_115353_1_0_6"/>
<dbReference type="OrthoDB" id="9794876at2"/>
<dbReference type="Proteomes" id="UP000000238">
    <property type="component" value="Chromosome"/>
</dbReference>
<dbReference type="GO" id="GO:0003676">
    <property type="term" value="F:nucleic acid binding"/>
    <property type="evidence" value="ECO:0007669"/>
    <property type="project" value="InterPro"/>
</dbReference>
<dbReference type="CDD" id="cd20736">
    <property type="entry name" value="PoNe_Nuclease"/>
    <property type="match status" value="1"/>
</dbReference>
<dbReference type="Gene3D" id="3.40.1350.10">
    <property type="match status" value="1"/>
</dbReference>
<dbReference type="HAMAP" id="MF_00048">
    <property type="entry name" value="UPF0102"/>
    <property type="match status" value="1"/>
</dbReference>
<dbReference type="InterPro" id="IPR011335">
    <property type="entry name" value="Restrct_endonuc-II-like"/>
</dbReference>
<dbReference type="InterPro" id="IPR011856">
    <property type="entry name" value="tRNA_endonuc-like_dom_sf"/>
</dbReference>
<dbReference type="InterPro" id="IPR003509">
    <property type="entry name" value="UPF0102_YraN-like"/>
</dbReference>
<dbReference type="NCBIfam" id="NF009150">
    <property type="entry name" value="PRK12497.1-3"/>
    <property type="match status" value="1"/>
</dbReference>
<dbReference type="NCBIfam" id="TIGR00252">
    <property type="entry name" value="YraN family protein"/>
    <property type="match status" value="1"/>
</dbReference>
<dbReference type="PANTHER" id="PTHR34039">
    <property type="entry name" value="UPF0102 PROTEIN YRAN"/>
    <property type="match status" value="1"/>
</dbReference>
<dbReference type="PANTHER" id="PTHR34039:SF1">
    <property type="entry name" value="UPF0102 PROTEIN YRAN"/>
    <property type="match status" value="1"/>
</dbReference>
<dbReference type="Pfam" id="PF02021">
    <property type="entry name" value="UPF0102"/>
    <property type="match status" value="1"/>
</dbReference>
<dbReference type="SUPFAM" id="SSF52980">
    <property type="entry name" value="Restriction endonuclease-like"/>
    <property type="match status" value="1"/>
</dbReference>
<name>Y5895_HAHCH</name>
<proteinExistence type="inferred from homology"/>
<keyword id="KW-1185">Reference proteome</keyword>